<sequence>MSVLFPINLEGALEALLFVSPEPLSLKKIAQTLELSVEEAKEIVLRLQEKLEQDQRGIMLHFSGEEVWLTTRPDFSVYIERLFKPPAQHLTQATLETLAIIAYKQPVTKTEIELIRGVKADSSIATLLEKGLIEEAGRKDAPGRPIIYRTTAKFLEFFGLKSLDELPPLNLENEAVNDGNNNFEE</sequence>
<proteinExistence type="inferred from homology"/>
<accession>Q3AAS0</accession>
<protein>
    <recommendedName>
        <fullName evidence="1">Segregation and condensation protein B</fullName>
    </recommendedName>
</protein>
<organism>
    <name type="scientific">Carboxydothermus hydrogenoformans (strain ATCC BAA-161 / DSM 6008 / Z-2901)</name>
    <dbReference type="NCBI Taxonomy" id="246194"/>
    <lineage>
        <taxon>Bacteria</taxon>
        <taxon>Bacillati</taxon>
        <taxon>Bacillota</taxon>
        <taxon>Clostridia</taxon>
        <taxon>Thermoanaerobacterales</taxon>
        <taxon>Thermoanaerobacteraceae</taxon>
        <taxon>Carboxydothermus</taxon>
    </lineage>
</organism>
<gene>
    <name evidence="1" type="primary">scpB</name>
    <name type="ordered locus">CHY_1945</name>
</gene>
<comment type="function">
    <text evidence="1">Participates in chromosomal partition during cell division. May act via the formation of a condensin-like complex containing Smc and ScpA that pull DNA away from mid-cell into both cell halves.</text>
</comment>
<comment type="subunit">
    <text evidence="1">Homodimer. Homodimerization may be required to stabilize the binding of ScpA to the Smc head domains. Component of a cohesin-like complex composed of ScpA, ScpB and the Smc homodimer, in which ScpA and ScpB bind to the head domain of Smc. The presence of the three proteins is required for the association of the complex with DNA.</text>
</comment>
<comment type="subcellular location">
    <subcellularLocation>
        <location evidence="1">Cytoplasm</location>
    </subcellularLocation>
    <text evidence="1">Associated with two foci at the outer edges of the nucleoid region in young cells, and at four foci within both cell halves in older cells.</text>
</comment>
<comment type="similarity">
    <text evidence="1">Belongs to the ScpB family.</text>
</comment>
<comment type="sequence caution" evidence="2">
    <conflict type="erroneous initiation">
        <sequence resource="EMBL-CDS" id="ABB14911"/>
    </conflict>
</comment>
<keyword id="KW-0131">Cell cycle</keyword>
<keyword id="KW-0132">Cell division</keyword>
<keyword id="KW-0159">Chromosome partition</keyword>
<keyword id="KW-0963">Cytoplasm</keyword>
<keyword id="KW-1185">Reference proteome</keyword>
<reference key="1">
    <citation type="journal article" date="2005" name="PLoS Genet.">
        <title>Life in hot carbon monoxide: the complete genome sequence of Carboxydothermus hydrogenoformans Z-2901.</title>
        <authorList>
            <person name="Wu M."/>
            <person name="Ren Q."/>
            <person name="Durkin A.S."/>
            <person name="Daugherty S.C."/>
            <person name="Brinkac L.M."/>
            <person name="Dodson R.J."/>
            <person name="Madupu R."/>
            <person name="Sullivan S.A."/>
            <person name="Kolonay J.F."/>
            <person name="Nelson W.C."/>
            <person name="Tallon L.J."/>
            <person name="Jones K.M."/>
            <person name="Ulrich L.E."/>
            <person name="Gonzalez J.M."/>
            <person name="Zhulin I.B."/>
            <person name="Robb F.T."/>
            <person name="Eisen J.A."/>
        </authorList>
    </citation>
    <scope>NUCLEOTIDE SEQUENCE [LARGE SCALE GENOMIC DNA]</scope>
    <source>
        <strain>ATCC BAA-161 / DSM 6008 / Z-2901</strain>
    </source>
</reference>
<feature type="chain" id="PRO_0000273296" description="Segregation and condensation protein B">
    <location>
        <begin position="1"/>
        <end position="185"/>
    </location>
</feature>
<name>SCPB_CARHZ</name>
<evidence type="ECO:0000255" key="1">
    <source>
        <dbReference type="HAMAP-Rule" id="MF_01804"/>
    </source>
</evidence>
<evidence type="ECO:0000305" key="2"/>
<dbReference type="EMBL" id="CP000141">
    <property type="protein sequence ID" value="ABB14911.1"/>
    <property type="status" value="ALT_INIT"/>
    <property type="molecule type" value="Genomic_DNA"/>
</dbReference>
<dbReference type="SMR" id="Q3AAS0"/>
<dbReference type="FunCoup" id="Q3AAS0">
    <property type="interactions" value="312"/>
</dbReference>
<dbReference type="STRING" id="246194.CHY_1945"/>
<dbReference type="KEGG" id="chy:CHY_1945"/>
<dbReference type="eggNOG" id="COG1386">
    <property type="taxonomic scope" value="Bacteria"/>
</dbReference>
<dbReference type="HOGENOM" id="CLU_045647_5_3_9"/>
<dbReference type="InParanoid" id="Q3AAS0"/>
<dbReference type="Proteomes" id="UP000002706">
    <property type="component" value="Chromosome"/>
</dbReference>
<dbReference type="GO" id="GO:0005737">
    <property type="term" value="C:cytoplasm"/>
    <property type="evidence" value="ECO:0007669"/>
    <property type="project" value="UniProtKB-SubCell"/>
</dbReference>
<dbReference type="GO" id="GO:0051301">
    <property type="term" value="P:cell division"/>
    <property type="evidence" value="ECO:0007669"/>
    <property type="project" value="UniProtKB-KW"/>
</dbReference>
<dbReference type="GO" id="GO:0051304">
    <property type="term" value="P:chromosome separation"/>
    <property type="evidence" value="ECO:0007669"/>
    <property type="project" value="InterPro"/>
</dbReference>
<dbReference type="GO" id="GO:0006260">
    <property type="term" value="P:DNA replication"/>
    <property type="evidence" value="ECO:0007669"/>
    <property type="project" value="UniProtKB-UniRule"/>
</dbReference>
<dbReference type="Gene3D" id="1.10.10.10">
    <property type="entry name" value="Winged helix-like DNA-binding domain superfamily/Winged helix DNA-binding domain"/>
    <property type="match status" value="2"/>
</dbReference>
<dbReference type="HAMAP" id="MF_01804">
    <property type="entry name" value="ScpB"/>
    <property type="match status" value="1"/>
</dbReference>
<dbReference type="InterPro" id="IPR005234">
    <property type="entry name" value="ScpB_csome_segregation"/>
</dbReference>
<dbReference type="InterPro" id="IPR036388">
    <property type="entry name" value="WH-like_DNA-bd_sf"/>
</dbReference>
<dbReference type="InterPro" id="IPR036390">
    <property type="entry name" value="WH_DNA-bd_sf"/>
</dbReference>
<dbReference type="NCBIfam" id="TIGR00281">
    <property type="entry name" value="SMC-Scp complex subunit ScpB"/>
    <property type="match status" value="1"/>
</dbReference>
<dbReference type="PANTHER" id="PTHR34298">
    <property type="entry name" value="SEGREGATION AND CONDENSATION PROTEIN B"/>
    <property type="match status" value="1"/>
</dbReference>
<dbReference type="PANTHER" id="PTHR34298:SF2">
    <property type="entry name" value="SEGREGATION AND CONDENSATION PROTEIN B"/>
    <property type="match status" value="1"/>
</dbReference>
<dbReference type="Pfam" id="PF04079">
    <property type="entry name" value="SMC_ScpB"/>
    <property type="match status" value="1"/>
</dbReference>
<dbReference type="PIRSF" id="PIRSF019345">
    <property type="entry name" value="ScpB"/>
    <property type="match status" value="1"/>
</dbReference>
<dbReference type="SUPFAM" id="SSF46785">
    <property type="entry name" value="Winged helix' DNA-binding domain"/>
    <property type="match status" value="2"/>
</dbReference>